<accession>P37360</accession>
<dbReference type="PIR" id="S44392">
    <property type="entry name" value="S44392"/>
</dbReference>
<dbReference type="SMR" id="P37360"/>
<dbReference type="FunCoup" id="P37360">
    <property type="interactions" value="237"/>
</dbReference>
<dbReference type="STRING" id="9796.ENSECAP00000012822"/>
<dbReference type="iPTMnet" id="P37360"/>
<dbReference type="PaxDb" id="9796-ENSECAP00000012822"/>
<dbReference type="InParanoid" id="P37360"/>
<dbReference type="Proteomes" id="UP000002281">
    <property type="component" value="Unplaced"/>
</dbReference>
<dbReference type="GO" id="GO:0005737">
    <property type="term" value="C:cytoplasm"/>
    <property type="evidence" value="ECO:0000318"/>
    <property type="project" value="GO_Central"/>
</dbReference>
<dbReference type="GO" id="GO:0016234">
    <property type="term" value="C:inclusion body"/>
    <property type="evidence" value="ECO:0000250"/>
    <property type="project" value="UniProtKB"/>
</dbReference>
<dbReference type="GO" id="GO:0005634">
    <property type="term" value="C:nucleus"/>
    <property type="evidence" value="ECO:0000250"/>
    <property type="project" value="UniProtKB"/>
</dbReference>
<dbReference type="GO" id="GO:0048471">
    <property type="term" value="C:perinuclear region of cytoplasm"/>
    <property type="evidence" value="ECO:0000250"/>
    <property type="project" value="UniProtKB"/>
</dbReference>
<dbReference type="GO" id="GO:0008021">
    <property type="term" value="C:synaptic vesicle"/>
    <property type="evidence" value="ECO:0000250"/>
    <property type="project" value="UniProtKB"/>
</dbReference>
<dbReference type="GO" id="GO:0046870">
    <property type="term" value="F:cadmium ion binding"/>
    <property type="evidence" value="ECO:0000250"/>
    <property type="project" value="UniProtKB"/>
</dbReference>
<dbReference type="GO" id="GO:0005507">
    <property type="term" value="F:copper ion binding"/>
    <property type="evidence" value="ECO:0000250"/>
    <property type="project" value="UniProtKB"/>
</dbReference>
<dbReference type="GO" id="GO:0046872">
    <property type="term" value="F:metal ion binding"/>
    <property type="evidence" value="ECO:0000318"/>
    <property type="project" value="GO_Central"/>
</dbReference>
<dbReference type="GO" id="GO:0140487">
    <property type="term" value="F:metal ion sequestering activity"/>
    <property type="evidence" value="ECO:0000250"/>
    <property type="project" value="UniProtKB"/>
</dbReference>
<dbReference type="GO" id="GO:0030295">
    <property type="term" value="F:protein kinase activator activity"/>
    <property type="evidence" value="ECO:0000250"/>
    <property type="project" value="UniProtKB"/>
</dbReference>
<dbReference type="GO" id="GO:0008270">
    <property type="term" value="F:zinc ion binding"/>
    <property type="evidence" value="ECO:0000250"/>
    <property type="project" value="UniProtKB"/>
</dbReference>
<dbReference type="GO" id="GO:0032148">
    <property type="term" value="P:activation of protein kinase B activity"/>
    <property type="evidence" value="ECO:0000250"/>
    <property type="project" value="UniProtKB"/>
</dbReference>
<dbReference type="GO" id="GO:1990748">
    <property type="term" value="P:cellular detoxification"/>
    <property type="evidence" value="ECO:0000250"/>
    <property type="project" value="UniProtKB"/>
</dbReference>
<dbReference type="GO" id="GO:0071276">
    <property type="term" value="P:cellular response to cadmium ion"/>
    <property type="evidence" value="ECO:0000318"/>
    <property type="project" value="GO_Central"/>
</dbReference>
<dbReference type="GO" id="GO:0071280">
    <property type="term" value="P:cellular response to copper ion"/>
    <property type="evidence" value="ECO:0000318"/>
    <property type="project" value="GO_Central"/>
</dbReference>
<dbReference type="GO" id="GO:0034614">
    <property type="term" value="P:cellular response to reactive oxygen species"/>
    <property type="evidence" value="ECO:0000250"/>
    <property type="project" value="UniProtKB"/>
</dbReference>
<dbReference type="GO" id="GO:0071294">
    <property type="term" value="P:cellular response to zinc ion"/>
    <property type="evidence" value="ECO:0000318"/>
    <property type="project" value="GO_Central"/>
</dbReference>
<dbReference type="GO" id="GO:0010273">
    <property type="term" value="P:detoxification of copper ion"/>
    <property type="evidence" value="ECO:0000318"/>
    <property type="project" value="GO_Central"/>
</dbReference>
<dbReference type="GO" id="GO:0006112">
    <property type="term" value="P:energy reserve metabolic process"/>
    <property type="evidence" value="ECO:0000250"/>
    <property type="project" value="UniProtKB"/>
</dbReference>
<dbReference type="GO" id="GO:0006882">
    <property type="term" value="P:intracellular zinc ion homeostasis"/>
    <property type="evidence" value="ECO:0000250"/>
    <property type="project" value="UniProtKB"/>
</dbReference>
<dbReference type="GO" id="GO:0033210">
    <property type="term" value="P:leptin-mediated signaling pathway"/>
    <property type="evidence" value="ECO:0000250"/>
    <property type="project" value="UniProtKB"/>
</dbReference>
<dbReference type="GO" id="GO:0030517">
    <property type="term" value="P:negative regulation of axon extension"/>
    <property type="evidence" value="ECO:0000250"/>
    <property type="project" value="UniProtKB"/>
</dbReference>
<dbReference type="GO" id="GO:0030308">
    <property type="term" value="P:negative regulation of cell growth"/>
    <property type="evidence" value="ECO:0000250"/>
    <property type="project" value="UniProtKB"/>
</dbReference>
<dbReference type="GO" id="GO:0043524">
    <property type="term" value="P:negative regulation of neuron apoptotic process"/>
    <property type="evidence" value="ECO:0000250"/>
    <property type="project" value="UniProtKB"/>
</dbReference>
<dbReference type="GO" id="GO:0051354">
    <property type="term" value="P:negative regulation of oxidoreductase activity"/>
    <property type="evidence" value="ECO:0000250"/>
    <property type="project" value="UniProtKB"/>
</dbReference>
<dbReference type="GO" id="GO:0045893">
    <property type="term" value="P:positive regulation of DNA-templated transcription"/>
    <property type="evidence" value="ECO:0000250"/>
    <property type="project" value="UniProtKB"/>
</dbReference>
<dbReference type="GO" id="GO:0070374">
    <property type="term" value="P:positive regulation of ERK1 and ERK2 cascade"/>
    <property type="evidence" value="ECO:0000250"/>
    <property type="project" value="UniProtKB"/>
</dbReference>
<dbReference type="GO" id="GO:0010628">
    <property type="term" value="P:positive regulation of gene expression"/>
    <property type="evidence" value="ECO:0000250"/>
    <property type="project" value="UniProtKB"/>
</dbReference>
<dbReference type="GO" id="GO:2000376">
    <property type="term" value="P:positive regulation of oxygen metabolic process"/>
    <property type="evidence" value="ECO:0000250"/>
    <property type="project" value="UniProtKB"/>
</dbReference>
<dbReference type="GO" id="GO:0001934">
    <property type="term" value="P:positive regulation of protein phosphorylation"/>
    <property type="evidence" value="ECO:0000250"/>
    <property type="project" value="UniProtKB"/>
</dbReference>
<dbReference type="GO" id="GO:0030949">
    <property type="term" value="P:positive regulation of vascular endothelial growth factor receptor signaling pathway"/>
    <property type="evidence" value="ECO:0000250"/>
    <property type="project" value="UniProtKB"/>
</dbReference>
<dbReference type="GO" id="GO:0050821">
    <property type="term" value="P:protein stabilization"/>
    <property type="evidence" value="ECO:0000250"/>
    <property type="project" value="UniProtKB"/>
</dbReference>
<dbReference type="GO" id="GO:0032095">
    <property type="term" value="P:regulation of response to food"/>
    <property type="evidence" value="ECO:0000250"/>
    <property type="project" value="UniProtKB"/>
</dbReference>
<dbReference type="GO" id="GO:0019430">
    <property type="term" value="P:removal of superoxide radicals"/>
    <property type="evidence" value="ECO:0000250"/>
    <property type="project" value="UniProtKB"/>
</dbReference>
<dbReference type="GO" id="GO:0001666">
    <property type="term" value="P:response to hypoxia"/>
    <property type="evidence" value="ECO:0000250"/>
    <property type="project" value="UniProtKB"/>
</dbReference>
<dbReference type="GO" id="GO:0006829">
    <property type="term" value="P:zinc ion transport"/>
    <property type="evidence" value="ECO:0000250"/>
    <property type="project" value="UniProtKB"/>
</dbReference>
<dbReference type="FunFam" id="4.10.10.10:FF:000001">
    <property type="entry name" value="Metallothionein"/>
    <property type="match status" value="1"/>
</dbReference>
<dbReference type="Gene3D" id="4.10.10.10">
    <property type="entry name" value="Metallothionein Isoform II"/>
    <property type="match status" value="1"/>
</dbReference>
<dbReference type="InterPro" id="IPR017854">
    <property type="entry name" value="Metalthion_dom_sf"/>
</dbReference>
<dbReference type="InterPro" id="IPR023587">
    <property type="entry name" value="Metalthion_dom_sf_vert"/>
</dbReference>
<dbReference type="InterPro" id="IPR000006">
    <property type="entry name" value="Metalthion_vert"/>
</dbReference>
<dbReference type="InterPro" id="IPR018064">
    <property type="entry name" value="Metalthion_vert_metal_BS"/>
</dbReference>
<dbReference type="PANTHER" id="PTHR23299">
    <property type="entry name" value="METALLOTHIONEIN"/>
    <property type="match status" value="1"/>
</dbReference>
<dbReference type="PANTHER" id="PTHR23299:SF18">
    <property type="entry name" value="METALLOTHIONEIN-3"/>
    <property type="match status" value="1"/>
</dbReference>
<dbReference type="Pfam" id="PF00131">
    <property type="entry name" value="Metallothio"/>
    <property type="match status" value="1"/>
</dbReference>
<dbReference type="PRINTS" id="PR00860">
    <property type="entry name" value="MTVERTEBRATE"/>
</dbReference>
<dbReference type="SUPFAM" id="SSF57868">
    <property type="entry name" value="Metallothionein"/>
    <property type="match status" value="1"/>
</dbReference>
<dbReference type="PROSITE" id="PS00203">
    <property type="entry name" value="METALLOTHIONEIN_VRT"/>
    <property type="match status" value="1"/>
</dbReference>
<organism>
    <name type="scientific">Equus caballus</name>
    <name type="common">Horse</name>
    <dbReference type="NCBI Taxonomy" id="9796"/>
    <lineage>
        <taxon>Eukaryota</taxon>
        <taxon>Metazoa</taxon>
        <taxon>Chordata</taxon>
        <taxon>Craniata</taxon>
        <taxon>Vertebrata</taxon>
        <taxon>Euteleostomi</taxon>
        <taxon>Mammalia</taxon>
        <taxon>Eutheria</taxon>
        <taxon>Laurasiatheria</taxon>
        <taxon>Perissodactyla</taxon>
        <taxon>Equidae</taxon>
        <taxon>Equus</taxon>
    </lineage>
</organism>
<evidence type="ECO:0000250" key="1">
    <source>
        <dbReference type="UniProtKB" id="P02795"/>
    </source>
</evidence>
<evidence type="ECO:0000250" key="2">
    <source>
        <dbReference type="UniProtKB" id="P28184"/>
    </source>
</evidence>
<evidence type="ECO:0000269" key="3">
    <source>
    </source>
</evidence>
<evidence type="ECO:0000305" key="4"/>
<feature type="chain" id="PRO_0000197249" description="Metallothionein-3">
    <location>
        <begin position="1"/>
        <end position="68"/>
    </location>
</feature>
<feature type="region of interest" description="Beta">
    <location>
        <begin position="1"/>
        <end position="30"/>
    </location>
</feature>
<feature type="region of interest" description="Alpha">
    <location>
        <begin position="31"/>
        <end position="68"/>
    </location>
</feature>
<feature type="binding site" evidence="1">
    <location>
        <position position="6"/>
    </location>
    <ligand>
        <name>a divalent metal cation</name>
        <dbReference type="ChEBI" id="CHEBI:60240"/>
        <label>1</label>
        <note>in cluster B</note>
    </ligand>
</feature>
<feature type="binding site" evidence="1">
    <location>
        <position position="8"/>
    </location>
    <ligand>
        <name>a divalent metal cation</name>
        <dbReference type="ChEBI" id="CHEBI:60240"/>
        <label>1</label>
        <note>in cluster B</note>
    </ligand>
</feature>
<feature type="binding site" evidence="1">
    <location>
        <position position="8"/>
    </location>
    <ligand>
        <name>a divalent metal cation</name>
        <dbReference type="ChEBI" id="CHEBI:60240"/>
        <label>2</label>
        <note>in cluster B</note>
    </ligand>
</feature>
<feature type="binding site" evidence="1">
    <location>
        <position position="14"/>
    </location>
    <ligand>
        <name>a divalent metal cation</name>
        <dbReference type="ChEBI" id="CHEBI:60240"/>
        <label>2</label>
        <note>in cluster B</note>
    </ligand>
</feature>
<feature type="binding site" evidence="1">
    <location>
        <position position="16"/>
    </location>
    <ligand>
        <name>a divalent metal cation</name>
        <dbReference type="ChEBI" id="CHEBI:60240"/>
        <label>2</label>
        <note>in cluster B</note>
    </ligand>
</feature>
<feature type="binding site" evidence="1">
    <location>
        <position position="16"/>
    </location>
    <ligand>
        <name>a divalent metal cation</name>
        <dbReference type="ChEBI" id="CHEBI:60240"/>
        <label>3</label>
        <note>in cluster B</note>
    </ligand>
</feature>
<feature type="binding site" evidence="1">
    <location>
        <position position="20"/>
    </location>
    <ligand>
        <name>a divalent metal cation</name>
        <dbReference type="ChEBI" id="CHEBI:60240"/>
        <label>3</label>
        <note>in cluster B</note>
    </ligand>
</feature>
<feature type="binding site" evidence="1">
    <location>
        <position position="22"/>
    </location>
    <ligand>
        <name>a divalent metal cation</name>
        <dbReference type="ChEBI" id="CHEBI:60240"/>
        <label>1</label>
        <note>in cluster B</note>
    </ligand>
</feature>
<feature type="binding site" evidence="1">
    <location>
        <position position="25"/>
    </location>
    <ligand>
        <name>a divalent metal cation</name>
        <dbReference type="ChEBI" id="CHEBI:60240"/>
        <label>1</label>
        <note>in cluster B</note>
    </ligand>
</feature>
<feature type="binding site" evidence="1">
    <location>
        <position position="25"/>
    </location>
    <ligand>
        <name>a divalent metal cation</name>
        <dbReference type="ChEBI" id="CHEBI:60240"/>
        <label>3</label>
        <note>in cluster B</note>
    </ligand>
</feature>
<feature type="binding site" evidence="1">
    <location>
        <position position="27"/>
    </location>
    <ligand>
        <name>a divalent metal cation</name>
        <dbReference type="ChEBI" id="CHEBI:60240"/>
        <label>2</label>
        <note>in cluster B</note>
    </ligand>
</feature>
<feature type="binding site" evidence="1">
    <location>
        <position position="30"/>
    </location>
    <ligand>
        <name>a divalent metal cation</name>
        <dbReference type="ChEBI" id="CHEBI:60240"/>
        <label>3</label>
        <note>in cluster B</note>
    </ligand>
</feature>
<feature type="binding site" evidence="1">
    <location>
        <position position="34"/>
    </location>
    <ligand>
        <name>a divalent metal cation</name>
        <dbReference type="ChEBI" id="CHEBI:60240"/>
        <label>4</label>
        <note>in cluster A</note>
    </ligand>
</feature>
<feature type="binding site" evidence="1">
    <location>
        <position position="35"/>
    </location>
    <ligand>
        <name>a divalent metal cation</name>
        <dbReference type="ChEBI" id="CHEBI:60240"/>
        <label>4</label>
        <note>in cluster A</note>
    </ligand>
</feature>
<feature type="binding site" evidence="1">
    <location>
        <position position="35"/>
    </location>
    <ligand>
        <name>a divalent metal cation</name>
        <dbReference type="ChEBI" id="CHEBI:60240"/>
        <label>5</label>
        <note>in cluster A</note>
    </ligand>
</feature>
<feature type="binding site" evidence="1">
    <location>
        <position position="37"/>
    </location>
    <ligand>
        <name>a divalent metal cation</name>
        <dbReference type="ChEBI" id="CHEBI:60240"/>
        <label>5</label>
        <note>in cluster A</note>
    </ligand>
</feature>
<feature type="binding site" evidence="1">
    <location>
        <position position="38"/>
    </location>
    <ligand>
        <name>a divalent metal cation</name>
        <dbReference type="ChEBI" id="CHEBI:60240"/>
        <label>5</label>
        <note>in cluster A</note>
    </ligand>
</feature>
<feature type="binding site" evidence="1">
    <location>
        <position position="38"/>
    </location>
    <ligand>
        <name>a divalent metal cation</name>
        <dbReference type="ChEBI" id="CHEBI:60240"/>
        <label>6</label>
        <note>in cluster A</note>
    </ligand>
</feature>
<feature type="binding site" evidence="1">
    <location>
        <position position="42"/>
    </location>
    <ligand>
        <name>a divalent metal cation</name>
        <dbReference type="ChEBI" id="CHEBI:60240"/>
        <label>6</label>
        <note>in cluster A</note>
    </ligand>
</feature>
<feature type="binding site" evidence="1">
    <location>
        <position position="45"/>
    </location>
    <ligand>
        <name>a divalent metal cation</name>
        <dbReference type="ChEBI" id="CHEBI:60240"/>
        <label>4</label>
        <note>in cluster A</note>
    </ligand>
</feature>
<feature type="binding site" evidence="1">
    <location>
        <position position="45"/>
    </location>
    <ligand>
        <name>a divalent metal cation</name>
        <dbReference type="ChEBI" id="CHEBI:60240"/>
        <label>6</label>
        <note>in cluster A</note>
    </ligand>
</feature>
<feature type="binding site" evidence="1">
    <location>
        <position position="49"/>
    </location>
    <ligand>
        <name>a divalent metal cation</name>
        <dbReference type="ChEBI" id="CHEBI:60240"/>
        <label>4</label>
        <note>in cluster A</note>
    </ligand>
</feature>
<feature type="binding site" evidence="1">
    <location>
        <position position="51"/>
    </location>
    <ligand>
        <name>a divalent metal cation</name>
        <dbReference type="ChEBI" id="CHEBI:60240"/>
        <label>5</label>
        <note>in cluster A</note>
    </ligand>
</feature>
<feature type="binding site" evidence="1">
    <location>
        <position position="51"/>
    </location>
    <ligand>
        <name>a divalent metal cation</name>
        <dbReference type="ChEBI" id="CHEBI:60240"/>
        <label>7</label>
        <note>in cluster A</note>
    </ligand>
</feature>
<feature type="binding site" evidence="1">
    <location>
        <position position="64"/>
    </location>
    <ligand>
        <name>a divalent metal cation</name>
        <dbReference type="ChEBI" id="CHEBI:60240"/>
        <label>7</label>
        <note>in cluster A</note>
    </ligand>
</feature>
<feature type="binding site" evidence="1">
    <location>
        <position position="66"/>
    </location>
    <ligand>
        <name>a divalent metal cation</name>
        <dbReference type="ChEBI" id="CHEBI:60240"/>
        <label>7</label>
        <note>in cluster A</note>
    </ligand>
</feature>
<feature type="binding site" evidence="1">
    <location>
        <position position="67"/>
    </location>
    <ligand>
        <name>a divalent metal cation</name>
        <dbReference type="ChEBI" id="CHEBI:60240"/>
        <label>6</label>
        <note>in cluster A</note>
    </ligand>
</feature>
<feature type="binding site" evidence="1">
    <location>
        <position position="67"/>
    </location>
    <ligand>
        <name>a divalent metal cation</name>
        <dbReference type="ChEBI" id="CHEBI:60240"/>
        <label>7</label>
        <note>in cluster A</note>
    </ligand>
</feature>
<feature type="modified residue" description="N-acetylmethionine" evidence="3">
    <location>
        <position position="1"/>
    </location>
</feature>
<feature type="modified residue" description="Phosphoserine" evidence="2">
    <location>
        <position position="33"/>
    </location>
</feature>
<protein>
    <recommendedName>
        <fullName>Metallothionein-3</fullName>
        <shortName>MT-3</shortName>
    </recommendedName>
    <alternativeName>
        <fullName>Growth inhibitory factor</fullName>
        <shortName>GIF</shortName>
    </alternativeName>
    <alternativeName>
        <fullName>Metallothionein-III</fullName>
        <shortName>MT-III</shortName>
    </alternativeName>
</protein>
<proteinExistence type="evidence at protein level"/>
<comment type="function">
    <text>Binds heavy metals. Contains three zinc and three copper atoms per polypeptide chain and only a negligible amount of cadmium.</text>
</comment>
<comment type="tissue specificity">
    <text>Brain.</text>
</comment>
<comment type="similarity">
    <text evidence="4">Belongs to the metallothionein superfamily. Type 1 family.</text>
</comment>
<gene>
    <name type="primary">MT3</name>
</gene>
<sequence length="68" mass="6927">MDPETCPCPTGGSCTCSGECKCEGCKCTSCKKSCCSCCPAECEKCAKDCVCKGGEGAEAEAEKCSCCQ</sequence>
<name>MT3_HORSE</name>
<keyword id="KW-0007">Acetylation</keyword>
<keyword id="KW-0186">Copper</keyword>
<keyword id="KW-0903">Direct protein sequencing</keyword>
<keyword id="KW-0479">Metal-binding</keyword>
<keyword id="KW-0480">Metal-thiolate cluster</keyword>
<keyword id="KW-0597">Phosphoprotein</keyword>
<keyword id="KW-1185">Reference proteome</keyword>
<keyword id="KW-0862">Zinc</keyword>
<reference key="1">
    <citation type="journal article" date="1994" name="FEBS Lett.">
        <title>Isolation, primary structures and metal binding properties of neuronal growth inhibitory factor (GIF) from bovine and equine brain.</title>
        <authorList>
            <person name="Pountney D.L."/>
            <person name="Fundel S.M."/>
            <person name="Faller P."/>
            <person name="Birchler N.E."/>
            <person name="Hunziker P."/>
            <person name="Vasak M."/>
        </authorList>
    </citation>
    <scope>PROTEIN SEQUENCE</scope>
    <scope>ACETYLATION AT MET-1</scope>
    <source>
        <tissue>Brain</tissue>
    </source>
</reference>